<organism>
    <name type="scientific">Rickettsia bellii (strain RML369-C)</name>
    <dbReference type="NCBI Taxonomy" id="336407"/>
    <lineage>
        <taxon>Bacteria</taxon>
        <taxon>Pseudomonadati</taxon>
        <taxon>Pseudomonadota</taxon>
        <taxon>Alphaproteobacteria</taxon>
        <taxon>Rickettsiales</taxon>
        <taxon>Rickettsiaceae</taxon>
        <taxon>Rickettsieae</taxon>
        <taxon>Rickettsia</taxon>
        <taxon>belli group</taxon>
    </lineage>
</organism>
<sequence length="291" mass="32591">MNDALKTYSIGIGWFLLSLVSSSANDVMSKYLGTRLHSFEVAFFRFFFSSIVLLPFVVYYGKNTLKTSRPFVHILRGLLLFFGMTSWTYGLSIAPVTTATVISFSIPLFTLILAVFFLNENIIWQRWVVTIVGFVGLVITLKPHAEDFNPEMLYFVLAAISFAMLDIINKKFVVKESMISMLFYSAIVTAVVSIPAAANYWLTPTLFELALLFILGSSGSLILFLLLKAFSMVDATATAPYRYLELVISAIAAYFIFNEFPDKSTLHGAVIIIPATLFIIYSEKKAMSKKI</sequence>
<gene>
    <name type="primary">sam</name>
    <name type="ordered locus">RBE_0021</name>
</gene>
<name>SAM_RICBR</name>
<protein>
    <recommendedName>
        <fullName>S-adenosylmethionine uptake transporter</fullName>
    </recommendedName>
</protein>
<proteinExistence type="inferred from homology"/>
<comment type="function">
    <text evidence="1">Transports S-adenosylmethionine.</text>
</comment>
<comment type="subcellular location">
    <subcellularLocation>
        <location evidence="3">Cell inner membrane</location>
        <topology evidence="3">Multi-pass membrane protein</topology>
    </subcellularLocation>
</comment>
<comment type="similarity">
    <text evidence="3">Belongs to the drug/metabolite transporter (DMT) superfamily. 10 TMS drug/metabolite exporter (DME) (TC 2.A.7.3) family.</text>
</comment>
<accession>Q1RKL2</accession>
<dbReference type="EMBL" id="CP000087">
    <property type="protein sequence ID" value="ABE04102.1"/>
    <property type="molecule type" value="Genomic_DNA"/>
</dbReference>
<dbReference type="RefSeq" id="WP_011476717.1">
    <property type="nucleotide sequence ID" value="NC_007940.1"/>
</dbReference>
<dbReference type="SMR" id="Q1RKL2"/>
<dbReference type="KEGG" id="rbe:RBE_0021"/>
<dbReference type="eggNOG" id="COG0697">
    <property type="taxonomic scope" value="Bacteria"/>
</dbReference>
<dbReference type="HOGENOM" id="CLU_032828_0_0_5"/>
<dbReference type="OrthoDB" id="9812899at2"/>
<dbReference type="Proteomes" id="UP000001951">
    <property type="component" value="Chromosome"/>
</dbReference>
<dbReference type="GO" id="GO:0005886">
    <property type="term" value="C:plasma membrane"/>
    <property type="evidence" value="ECO:0007669"/>
    <property type="project" value="UniProtKB-SubCell"/>
</dbReference>
<dbReference type="GO" id="GO:0006865">
    <property type="term" value="P:amino acid transport"/>
    <property type="evidence" value="ECO:0007669"/>
    <property type="project" value="UniProtKB-KW"/>
</dbReference>
<dbReference type="InterPro" id="IPR000620">
    <property type="entry name" value="EamA_dom"/>
</dbReference>
<dbReference type="PANTHER" id="PTHR22911">
    <property type="entry name" value="ACYL-MALONYL CONDENSING ENZYME-RELATED"/>
    <property type="match status" value="1"/>
</dbReference>
<dbReference type="PANTHER" id="PTHR22911:SF6">
    <property type="entry name" value="SOLUTE CARRIER FAMILY 35 MEMBER G1"/>
    <property type="match status" value="1"/>
</dbReference>
<dbReference type="Pfam" id="PF00892">
    <property type="entry name" value="EamA"/>
    <property type="match status" value="2"/>
</dbReference>
<dbReference type="SUPFAM" id="SSF103481">
    <property type="entry name" value="Multidrug resistance efflux transporter EmrE"/>
    <property type="match status" value="2"/>
</dbReference>
<keyword id="KW-0029">Amino-acid transport</keyword>
<keyword id="KW-0997">Cell inner membrane</keyword>
<keyword id="KW-1003">Cell membrane</keyword>
<keyword id="KW-0472">Membrane</keyword>
<keyword id="KW-0677">Repeat</keyword>
<keyword id="KW-0812">Transmembrane</keyword>
<keyword id="KW-1133">Transmembrane helix</keyword>
<keyword id="KW-0813">Transport</keyword>
<feature type="chain" id="PRO_0000280994" description="S-adenosylmethionine uptake transporter">
    <location>
        <begin position="1"/>
        <end position="291"/>
    </location>
</feature>
<feature type="transmembrane region" description="Helical" evidence="2">
    <location>
        <begin position="4"/>
        <end position="24"/>
    </location>
</feature>
<feature type="transmembrane region" description="Helical" evidence="2">
    <location>
        <begin position="41"/>
        <end position="61"/>
    </location>
</feature>
<feature type="transmembrane region" description="Helical" evidence="2">
    <location>
        <begin position="74"/>
        <end position="91"/>
    </location>
</feature>
<feature type="transmembrane region" description="Helical" evidence="2">
    <location>
        <begin position="98"/>
        <end position="118"/>
    </location>
</feature>
<feature type="transmembrane region" description="Helical" evidence="2">
    <location>
        <begin position="121"/>
        <end position="141"/>
    </location>
</feature>
<feature type="transmembrane region" description="Helical" evidence="2">
    <location>
        <begin position="148"/>
        <end position="168"/>
    </location>
</feature>
<feature type="transmembrane region" description="Helical" evidence="2">
    <location>
        <begin position="178"/>
        <end position="198"/>
    </location>
</feature>
<feature type="transmembrane region" description="Helical" evidence="2">
    <location>
        <begin position="206"/>
        <end position="226"/>
    </location>
</feature>
<feature type="transmembrane region" description="Helical" evidence="2">
    <location>
        <begin position="237"/>
        <end position="257"/>
    </location>
</feature>
<feature type="transmembrane region" description="Helical" evidence="2">
    <location>
        <begin position="260"/>
        <end position="280"/>
    </location>
</feature>
<feature type="domain" description="EamA 1">
    <location>
        <begin position="21"/>
        <end position="141"/>
    </location>
</feature>
<feature type="domain" description="EamA 2">
    <location>
        <begin position="160"/>
        <end position="280"/>
    </location>
</feature>
<evidence type="ECO:0000250" key="1"/>
<evidence type="ECO:0000255" key="2"/>
<evidence type="ECO:0000305" key="3"/>
<reference key="1">
    <citation type="journal article" date="2006" name="PLoS Genet.">
        <title>Genome sequence of Rickettsia bellii illuminates the role of amoebae in gene exchanges between intracellular pathogens.</title>
        <authorList>
            <person name="Ogata H."/>
            <person name="La Scola B."/>
            <person name="Audic S."/>
            <person name="Renesto P."/>
            <person name="Blanc G."/>
            <person name="Robert C."/>
            <person name="Fournier P.-E."/>
            <person name="Claverie J.-M."/>
            <person name="Raoult D."/>
        </authorList>
    </citation>
    <scope>NUCLEOTIDE SEQUENCE [LARGE SCALE GENOMIC DNA]</scope>
    <source>
        <strain>RML369-C</strain>
    </source>
</reference>